<feature type="chain" id="PRO_0000173790" description="Cytoplasmic trehalase">
    <location>
        <begin position="1"/>
        <end position="549"/>
    </location>
</feature>
<feature type="active site" description="Proton donor/acceptor" evidence="1">
    <location>
        <position position="326"/>
    </location>
</feature>
<feature type="active site" description="Proton donor/acceptor" evidence="1">
    <location>
        <position position="509"/>
    </location>
</feature>
<feature type="binding site" evidence="1">
    <location>
        <position position="168"/>
    </location>
    <ligand>
        <name>substrate</name>
    </ligand>
</feature>
<feature type="binding site" evidence="1">
    <location>
        <begin position="175"/>
        <end position="176"/>
    </location>
    <ligand>
        <name>substrate</name>
    </ligand>
</feature>
<feature type="binding site" evidence="1">
    <location>
        <position position="212"/>
    </location>
    <ligand>
        <name>substrate</name>
    </ligand>
</feature>
<feature type="binding site" evidence="1">
    <location>
        <begin position="221"/>
        <end position="223"/>
    </location>
    <ligand>
        <name>substrate</name>
    </ligand>
</feature>
<feature type="binding site" evidence="1">
    <location>
        <begin position="292"/>
        <end position="294"/>
    </location>
    <ligand>
        <name>substrate</name>
    </ligand>
</feature>
<feature type="binding site" evidence="1">
    <location>
        <position position="324"/>
    </location>
    <ligand>
        <name>substrate</name>
    </ligand>
</feature>
<feature type="binding site" evidence="1">
    <location>
        <position position="525"/>
    </location>
    <ligand>
        <name>substrate</name>
    </ligand>
</feature>
<sequence length="549" mass="63644">MLNQKLNPTPSEDLTIDVDLLYETDPCELKLDEMIEAEPEPEMIEGLPASDALTPADRYLELFEHVQSTKLFPDSKTFPDCAPKMDPLDILIRYRKVRRHRDFDLRRFVENHFWLPETLSSEYVSNPENSLKEHIDQLWPILTREPQDHIPWSSLLALPQSYIVPGGRFSETYYWDSYFTMLGLAESGREDLLKCMADNFAWMIENYGHIPNGNRTYYLSRSQPPVFALMVELFEEDGVRGARRYLDHLKMEYAFWMDGAESLALNQAYRHVVRMPDGSLLNRYWDDRDTPRDESWLEDVETAKHSGRPPNEVYRDLRAGAASGWDYSSRWLRDAGRLASIRTTQFIPIDLNAFLYKLESAIANISALKGERDTEALFRQKASDRRAAVNHYLWDDENGCYRDYDWRREEMALFSAASIVPLYVGMANHEQADRLANVVRSRLLTPGGIMATEYETGEQWDKPNGWAPLQWMAIQGFKRYGDDMLGDEIAHNWLKTVNHFYQEHHKLIEKYHISGGTPREGGGGEYPLQDGFGWTNGVVRRLIGLYGEP</sequence>
<proteinExistence type="inferred from homology"/>
<accession>Q8ZLC8</accession>
<evidence type="ECO:0000255" key="1">
    <source>
        <dbReference type="HAMAP-Rule" id="MF_01059"/>
    </source>
</evidence>
<gene>
    <name evidence="1" type="primary">treF</name>
    <name type="ordered locus">STM3603</name>
</gene>
<comment type="function">
    <text evidence="1">Hydrolyzes trehalose to glucose. Could be involved, in cells returning to low osmolarity conditions, in the utilization of the accumulated cytoplasmic trehalose, which was synthesized in response to high osmolarity.</text>
</comment>
<comment type="catalytic activity">
    <reaction evidence="1">
        <text>alpha,alpha-trehalose + H2O = alpha-D-glucose + beta-D-glucose</text>
        <dbReference type="Rhea" id="RHEA:32675"/>
        <dbReference type="ChEBI" id="CHEBI:15377"/>
        <dbReference type="ChEBI" id="CHEBI:15903"/>
        <dbReference type="ChEBI" id="CHEBI:16551"/>
        <dbReference type="ChEBI" id="CHEBI:17925"/>
        <dbReference type="EC" id="3.2.1.28"/>
    </reaction>
</comment>
<comment type="pathway">
    <text evidence="1">Glycan degradation; trehalose degradation; D-glucose from alpha,alpha-trehalose: step 1/1.</text>
</comment>
<comment type="subunit">
    <text evidence="1">Monomer.</text>
</comment>
<comment type="subcellular location">
    <subcellularLocation>
        <location evidence="1">Cytoplasm</location>
    </subcellularLocation>
</comment>
<comment type="similarity">
    <text evidence="1">Belongs to the glycosyl hydrolase 37 family.</text>
</comment>
<name>TREF_SALTY</name>
<dbReference type="EC" id="3.2.1.28" evidence="1"/>
<dbReference type="EMBL" id="AE006468">
    <property type="protein sequence ID" value="AAL22463.1"/>
    <property type="molecule type" value="Genomic_DNA"/>
</dbReference>
<dbReference type="RefSeq" id="NP_462504.1">
    <property type="nucleotide sequence ID" value="NC_003197.2"/>
</dbReference>
<dbReference type="RefSeq" id="WP_000934257.1">
    <property type="nucleotide sequence ID" value="NC_003197.2"/>
</dbReference>
<dbReference type="SMR" id="Q8ZLC8"/>
<dbReference type="STRING" id="99287.STM3603"/>
<dbReference type="CAZy" id="GH37">
    <property type="family name" value="Glycoside Hydrolase Family 37"/>
</dbReference>
<dbReference type="PaxDb" id="99287-STM3603"/>
<dbReference type="GeneID" id="1255126"/>
<dbReference type="KEGG" id="stm:STM3603"/>
<dbReference type="PATRIC" id="fig|99287.12.peg.3808"/>
<dbReference type="HOGENOM" id="CLU_006451_3_1_6"/>
<dbReference type="OMA" id="DAPFGWA"/>
<dbReference type="PhylomeDB" id="Q8ZLC8"/>
<dbReference type="BioCyc" id="SENT99287:STM3603-MONOMER"/>
<dbReference type="UniPathway" id="UPA00300">
    <property type="reaction ID" value="UER00535"/>
</dbReference>
<dbReference type="Proteomes" id="UP000001014">
    <property type="component" value="Chromosome"/>
</dbReference>
<dbReference type="GO" id="GO:0005737">
    <property type="term" value="C:cytoplasm"/>
    <property type="evidence" value="ECO:0007669"/>
    <property type="project" value="UniProtKB-SubCell"/>
</dbReference>
<dbReference type="GO" id="GO:0004555">
    <property type="term" value="F:alpha,alpha-trehalase activity"/>
    <property type="evidence" value="ECO:0000318"/>
    <property type="project" value="GO_Central"/>
</dbReference>
<dbReference type="GO" id="GO:0071474">
    <property type="term" value="P:cellular hyperosmotic response"/>
    <property type="evidence" value="ECO:0007669"/>
    <property type="project" value="InterPro"/>
</dbReference>
<dbReference type="GO" id="GO:0005993">
    <property type="term" value="P:trehalose catabolic process"/>
    <property type="evidence" value="ECO:0000318"/>
    <property type="project" value="GO_Central"/>
</dbReference>
<dbReference type="FunFam" id="1.50.10.10:FF:000003">
    <property type="entry name" value="Cytoplasmic trehalase"/>
    <property type="match status" value="1"/>
</dbReference>
<dbReference type="Gene3D" id="1.50.10.10">
    <property type="match status" value="1"/>
</dbReference>
<dbReference type="HAMAP" id="MF_01059">
    <property type="entry name" value="Cyt_trehalase"/>
    <property type="match status" value="1"/>
</dbReference>
<dbReference type="InterPro" id="IPR008928">
    <property type="entry name" value="6-hairpin_glycosidase_sf"/>
</dbReference>
<dbReference type="InterPro" id="IPR012341">
    <property type="entry name" value="6hp_glycosidase-like_sf"/>
</dbReference>
<dbReference type="InterPro" id="IPR023715">
    <property type="entry name" value="Cyt_trehalase"/>
</dbReference>
<dbReference type="InterPro" id="IPR001661">
    <property type="entry name" value="Glyco_hydro_37"/>
</dbReference>
<dbReference type="InterPro" id="IPR018232">
    <property type="entry name" value="Glyco_hydro_37_CS"/>
</dbReference>
<dbReference type="NCBIfam" id="NF009773">
    <property type="entry name" value="PRK13270.1"/>
    <property type="match status" value="1"/>
</dbReference>
<dbReference type="NCBIfam" id="NF009774">
    <property type="entry name" value="PRK13271.1"/>
    <property type="match status" value="1"/>
</dbReference>
<dbReference type="PANTHER" id="PTHR23403:SF8">
    <property type="entry name" value="CYTOPLASMIC TREHALASE"/>
    <property type="match status" value="1"/>
</dbReference>
<dbReference type="PANTHER" id="PTHR23403">
    <property type="entry name" value="TREHALASE"/>
    <property type="match status" value="1"/>
</dbReference>
<dbReference type="Pfam" id="PF01204">
    <property type="entry name" value="Trehalase"/>
    <property type="match status" value="1"/>
</dbReference>
<dbReference type="PRINTS" id="PR00744">
    <property type="entry name" value="GLHYDRLASE37"/>
</dbReference>
<dbReference type="SUPFAM" id="SSF48208">
    <property type="entry name" value="Six-hairpin glycosidases"/>
    <property type="match status" value="1"/>
</dbReference>
<dbReference type="PROSITE" id="PS00927">
    <property type="entry name" value="TREHALASE_1"/>
    <property type="match status" value="1"/>
</dbReference>
<dbReference type="PROSITE" id="PS00928">
    <property type="entry name" value="TREHALASE_2"/>
    <property type="match status" value="1"/>
</dbReference>
<reference key="1">
    <citation type="journal article" date="2001" name="Nature">
        <title>Complete genome sequence of Salmonella enterica serovar Typhimurium LT2.</title>
        <authorList>
            <person name="McClelland M."/>
            <person name="Sanderson K.E."/>
            <person name="Spieth J."/>
            <person name="Clifton S.W."/>
            <person name="Latreille P."/>
            <person name="Courtney L."/>
            <person name="Porwollik S."/>
            <person name="Ali J."/>
            <person name="Dante M."/>
            <person name="Du F."/>
            <person name="Hou S."/>
            <person name="Layman D."/>
            <person name="Leonard S."/>
            <person name="Nguyen C."/>
            <person name="Scott K."/>
            <person name="Holmes A."/>
            <person name="Grewal N."/>
            <person name="Mulvaney E."/>
            <person name="Ryan E."/>
            <person name="Sun H."/>
            <person name="Florea L."/>
            <person name="Miller W."/>
            <person name="Stoneking T."/>
            <person name="Nhan M."/>
            <person name="Waterston R."/>
            <person name="Wilson R.K."/>
        </authorList>
    </citation>
    <scope>NUCLEOTIDE SEQUENCE [LARGE SCALE GENOMIC DNA]</scope>
    <source>
        <strain>LT2 / SGSC1412 / ATCC 700720</strain>
    </source>
</reference>
<protein>
    <recommendedName>
        <fullName evidence="1">Cytoplasmic trehalase</fullName>
        <ecNumber evidence="1">3.2.1.28</ecNumber>
    </recommendedName>
    <alternativeName>
        <fullName evidence="1">Alpha,alpha-trehalase</fullName>
    </alternativeName>
    <alternativeName>
        <fullName evidence="1">Alpha,alpha-trehalose glucohydrolase</fullName>
    </alternativeName>
</protein>
<keyword id="KW-0963">Cytoplasm</keyword>
<keyword id="KW-0326">Glycosidase</keyword>
<keyword id="KW-0378">Hydrolase</keyword>
<keyword id="KW-1185">Reference proteome</keyword>
<organism>
    <name type="scientific">Salmonella typhimurium (strain LT2 / SGSC1412 / ATCC 700720)</name>
    <dbReference type="NCBI Taxonomy" id="99287"/>
    <lineage>
        <taxon>Bacteria</taxon>
        <taxon>Pseudomonadati</taxon>
        <taxon>Pseudomonadota</taxon>
        <taxon>Gammaproteobacteria</taxon>
        <taxon>Enterobacterales</taxon>
        <taxon>Enterobacteriaceae</taxon>
        <taxon>Salmonella</taxon>
    </lineage>
</organism>